<name>PYRE_ECOHS</name>
<dbReference type="EC" id="2.4.2.10" evidence="1"/>
<dbReference type="EMBL" id="CP000802">
    <property type="protein sequence ID" value="ABV08058.1"/>
    <property type="molecule type" value="Genomic_DNA"/>
</dbReference>
<dbReference type="RefSeq" id="WP_000806177.1">
    <property type="nucleotide sequence ID" value="NC_009800.1"/>
</dbReference>
<dbReference type="SMR" id="A8A6A4"/>
<dbReference type="GeneID" id="75202211"/>
<dbReference type="KEGG" id="ecx:EcHS_A3851"/>
<dbReference type="HOGENOM" id="CLU_074878_0_1_6"/>
<dbReference type="UniPathway" id="UPA00070">
    <property type="reaction ID" value="UER00119"/>
</dbReference>
<dbReference type="GO" id="GO:0005737">
    <property type="term" value="C:cytoplasm"/>
    <property type="evidence" value="ECO:0007669"/>
    <property type="project" value="TreeGrafter"/>
</dbReference>
<dbReference type="GO" id="GO:0000287">
    <property type="term" value="F:magnesium ion binding"/>
    <property type="evidence" value="ECO:0007669"/>
    <property type="project" value="UniProtKB-UniRule"/>
</dbReference>
<dbReference type="GO" id="GO:0004588">
    <property type="term" value="F:orotate phosphoribosyltransferase activity"/>
    <property type="evidence" value="ECO:0007669"/>
    <property type="project" value="UniProtKB-UniRule"/>
</dbReference>
<dbReference type="GO" id="GO:0006207">
    <property type="term" value="P:'de novo' pyrimidine nucleobase biosynthetic process"/>
    <property type="evidence" value="ECO:0007669"/>
    <property type="project" value="TreeGrafter"/>
</dbReference>
<dbReference type="GO" id="GO:0044205">
    <property type="term" value="P:'de novo' UMP biosynthetic process"/>
    <property type="evidence" value="ECO:0007669"/>
    <property type="project" value="UniProtKB-UniRule"/>
</dbReference>
<dbReference type="GO" id="GO:0046132">
    <property type="term" value="P:pyrimidine ribonucleoside biosynthetic process"/>
    <property type="evidence" value="ECO:0007669"/>
    <property type="project" value="TreeGrafter"/>
</dbReference>
<dbReference type="CDD" id="cd06223">
    <property type="entry name" value="PRTases_typeI"/>
    <property type="match status" value="1"/>
</dbReference>
<dbReference type="FunFam" id="3.40.50.2020:FF:000008">
    <property type="entry name" value="Orotate phosphoribosyltransferase"/>
    <property type="match status" value="1"/>
</dbReference>
<dbReference type="Gene3D" id="3.40.50.2020">
    <property type="match status" value="1"/>
</dbReference>
<dbReference type="HAMAP" id="MF_01208">
    <property type="entry name" value="PyrE"/>
    <property type="match status" value="1"/>
</dbReference>
<dbReference type="InterPro" id="IPR023031">
    <property type="entry name" value="OPRT"/>
</dbReference>
<dbReference type="InterPro" id="IPR004467">
    <property type="entry name" value="Or_phspho_trans_dom"/>
</dbReference>
<dbReference type="InterPro" id="IPR000836">
    <property type="entry name" value="PRibTrfase_dom"/>
</dbReference>
<dbReference type="InterPro" id="IPR029057">
    <property type="entry name" value="PRTase-like"/>
</dbReference>
<dbReference type="NCBIfam" id="TIGR00336">
    <property type="entry name" value="pyrE"/>
    <property type="match status" value="1"/>
</dbReference>
<dbReference type="PANTHER" id="PTHR46683">
    <property type="entry name" value="OROTATE PHOSPHORIBOSYLTRANSFERASE 1-RELATED"/>
    <property type="match status" value="1"/>
</dbReference>
<dbReference type="PANTHER" id="PTHR46683:SF1">
    <property type="entry name" value="OROTATE PHOSPHORIBOSYLTRANSFERASE 1-RELATED"/>
    <property type="match status" value="1"/>
</dbReference>
<dbReference type="Pfam" id="PF00156">
    <property type="entry name" value="Pribosyltran"/>
    <property type="match status" value="1"/>
</dbReference>
<dbReference type="SUPFAM" id="SSF53271">
    <property type="entry name" value="PRTase-like"/>
    <property type="match status" value="1"/>
</dbReference>
<dbReference type="PROSITE" id="PS00103">
    <property type="entry name" value="PUR_PYR_PR_TRANSFER"/>
    <property type="match status" value="1"/>
</dbReference>
<proteinExistence type="inferred from homology"/>
<protein>
    <recommendedName>
        <fullName evidence="1">Orotate phosphoribosyltransferase</fullName>
        <shortName evidence="1">OPRT</shortName>
        <shortName evidence="1">OPRTase</shortName>
        <ecNumber evidence="1">2.4.2.10</ecNumber>
    </recommendedName>
</protein>
<organism>
    <name type="scientific">Escherichia coli O9:H4 (strain HS)</name>
    <dbReference type="NCBI Taxonomy" id="331112"/>
    <lineage>
        <taxon>Bacteria</taxon>
        <taxon>Pseudomonadati</taxon>
        <taxon>Pseudomonadota</taxon>
        <taxon>Gammaproteobacteria</taxon>
        <taxon>Enterobacterales</taxon>
        <taxon>Enterobacteriaceae</taxon>
        <taxon>Escherichia</taxon>
    </lineage>
</organism>
<reference key="1">
    <citation type="journal article" date="2008" name="J. Bacteriol.">
        <title>The pangenome structure of Escherichia coli: comparative genomic analysis of E. coli commensal and pathogenic isolates.</title>
        <authorList>
            <person name="Rasko D.A."/>
            <person name="Rosovitz M.J."/>
            <person name="Myers G.S.A."/>
            <person name="Mongodin E.F."/>
            <person name="Fricke W.F."/>
            <person name="Gajer P."/>
            <person name="Crabtree J."/>
            <person name="Sebaihia M."/>
            <person name="Thomson N.R."/>
            <person name="Chaudhuri R."/>
            <person name="Henderson I.R."/>
            <person name="Sperandio V."/>
            <person name="Ravel J."/>
        </authorList>
    </citation>
    <scope>NUCLEOTIDE SEQUENCE [LARGE SCALE GENOMIC DNA]</scope>
    <source>
        <strain>HS</strain>
    </source>
</reference>
<accession>A8A6A4</accession>
<feature type="chain" id="PRO_1000066228" description="Orotate phosphoribosyltransferase">
    <location>
        <begin position="1"/>
        <end position="213"/>
    </location>
</feature>
<feature type="binding site" description="in other chain" evidence="1">
    <location>
        <position position="26"/>
    </location>
    <ligand>
        <name>5-phospho-alpha-D-ribose 1-diphosphate</name>
        <dbReference type="ChEBI" id="CHEBI:58017"/>
        <note>ligand shared between dimeric partners</note>
    </ligand>
</feature>
<feature type="binding site" evidence="1">
    <location>
        <begin position="34"/>
        <end position="35"/>
    </location>
    <ligand>
        <name>orotate</name>
        <dbReference type="ChEBI" id="CHEBI:30839"/>
    </ligand>
</feature>
<feature type="binding site" description="in other chain" evidence="1">
    <location>
        <begin position="72"/>
        <end position="73"/>
    </location>
    <ligand>
        <name>5-phospho-alpha-D-ribose 1-diphosphate</name>
        <dbReference type="ChEBI" id="CHEBI:58017"/>
        <note>ligand shared between dimeric partners</note>
    </ligand>
</feature>
<feature type="binding site" evidence="1">
    <location>
        <position position="99"/>
    </location>
    <ligand>
        <name>5-phospho-alpha-D-ribose 1-diphosphate</name>
        <dbReference type="ChEBI" id="CHEBI:58017"/>
        <note>ligand shared between dimeric partners</note>
    </ligand>
</feature>
<feature type="binding site" description="in other chain" evidence="1">
    <location>
        <position position="100"/>
    </location>
    <ligand>
        <name>5-phospho-alpha-D-ribose 1-diphosphate</name>
        <dbReference type="ChEBI" id="CHEBI:58017"/>
        <note>ligand shared between dimeric partners</note>
    </ligand>
</feature>
<feature type="binding site" evidence="1">
    <location>
        <position position="103"/>
    </location>
    <ligand>
        <name>5-phospho-alpha-D-ribose 1-diphosphate</name>
        <dbReference type="ChEBI" id="CHEBI:58017"/>
        <note>ligand shared between dimeric partners</note>
    </ligand>
</feature>
<feature type="binding site" evidence="1">
    <location>
        <position position="105"/>
    </location>
    <ligand>
        <name>5-phospho-alpha-D-ribose 1-diphosphate</name>
        <dbReference type="ChEBI" id="CHEBI:58017"/>
        <note>ligand shared between dimeric partners</note>
    </ligand>
</feature>
<feature type="binding site" description="in other chain" evidence="1">
    <location>
        <begin position="124"/>
        <end position="132"/>
    </location>
    <ligand>
        <name>5-phospho-alpha-D-ribose 1-diphosphate</name>
        <dbReference type="ChEBI" id="CHEBI:58017"/>
        <note>ligand shared between dimeric partners</note>
    </ligand>
</feature>
<feature type="binding site" evidence="1">
    <location>
        <position position="128"/>
    </location>
    <ligand>
        <name>orotate</name>
        <dbReference type="ChEBI" id="CHEBI:30839"/>
    </ligand>
</feature>
<feature type="binding site" evidence="1">
    <location>
        <position position="156"/>
    </location>
    <ligand>
        <name>orotate</name>
        <dbReference type="ChEBI" id="CHEBI:30839"/>
    </ligand>
</feature>
<keyword id="KW-0328">Glycosyltransferase</keyword>
<keyword id="KW-0460">Magnesium</keyword>
<keyword id="KW-0665">Pyrimidine biosynthesis</keyword>
<keyword id="KW-0808">Transferase</keyword>
<sequence length="213" mass="23567">MKPYQRQFIEFALSKQVLKFGEFTLKSGRKSPYFFNAGLFNTGRDLALLGRFYAEALVDSGIEFDLLFGPAYKGIPIATTTAVALAEHHDLDLPYCFNRKEAKDHGEGGNLVGSALQGRVMLVDDVITAGTAIRESMEIIQANGATLAGVLISLDRQERGRGEISAIQEVERDYNCKVISIITLKDLIAYLEEKPEMAEHLAAVKAYREEFGV</sequence>
<comment type="function">
    <text evidence="1">Catalyzes the transfer of a ribosyl phosphate group from 5-phosphoribose 1-diphosphate to orotate, leading to the formation of orotidine monophosphate (OMP).</text>
</comment>
<comment type="catalytic activity">
    <reaction evidence="1">
        <text>orotidine 5'-phosphate + diphosphate = orotate + 5-phospho-alpha-D-ribose 1-diphosphate</text>
        <dbReference type="Rhea" id="RHEA:10380"/>
        <dbReference type="ChEBI" id="CHEBI:30839"/>
        <dbReference type="ChEBI" id="CHEBI:33019"/>
        <dbReference type="ChEBI" id="CHEBI:57538"/>
        <dbReference type="ChEBI" id="CHEBI:58017"/>
        <dbReference type="EC" id="2.4.2.10"/>
    </reaction>
</comment>
<comment type="cofactor">
    <cofactor evidence="1">
        <name>Mg(2+)</name>
        <dbReference type="ChEBI" id="CHEBI:18420"/>
    </cofactor>
</comment>
<comment type="pathway">
    <text evidence="1">Pyrimidine metabolism; UMP biosynthesis via de novo pathway; UMP from orotate: step 1/2.</text>
</comment>
<comment type="subunit">
    <text evidence="1">Homodimer.</text>
</comment>
<comment type="similarity">
    <text evidence="1">Belongs to the purine/pyrimidine phosphoribosyltransferase family. PyrE subfamily.</text>
</comment>
<evidence type="ECO:0000255" key="1">
    <source>
        <dbReference type="HAMAP-Rule" id="MF_01208"/>
    </source>
</evidence>
<gene>
    <name evidence="1" type="primary">pyrE</name>
    <name type="ordered locus">EcHS_A3851</name>
</gene>